<sequence>MSKKLLIKTWGCQMNEYDSSKMADLLNAANGYELTEEPEEADVLLLNTCSIREKAQEKVFHQLGRWKTLKDKKPGVVIGVGGCVATQEGDHIRQRAPYVDVIFGPQTLHRLPEMIKQSQSDEAPVMDISFPEIEKFDRLPEPRAEGATAFVSIMEGCSKYCTYCVVPYTRGEEVSRPMDDVLFEIAQLADQGVREVNLLGQNVNAYRGPMHDGEICSFAELLRLVASIDGIDRIRFTTSHPLEFTDDIIAVYEDTPELVSFLHLPVQSGSDRVLTMMKRPHTGIEYKSIIRKLRKARPDIQISSDFIVGFPGETDKDFQDTMKLIKDVDFDMSFSFIFSPRPGTPAADYPCDLSEQVKKERLYELQQTVNTQAMRYSRQMLDTEQRVLVEGPSKKNLMELRARTENNRVVNFEGSADLIGQFVDVKITDVFANSLRGELVRTEKDMDLRSVISPTQMMAKTRREDELGVATFTP</sequence>
<proteinExistence type="inferred from homology"/>
<dbReference type="EC" id="2.8.4.3" evidence="1"/>
<dbReference type="EMBL" id="CP000789">
    <property type="protein sequence ID" value="ABU70219.1"/>
    <property type="molecule type" value="Genomic_DNA"/>
</dbReference>
<dbReference type="RefSeq" id="WP_010446468.1">
    <property type="nucleotide sequence ID" value="NC_022269.1"/>
</dbReference>
<dbReference type="SMR" id="A7N1G9"/>
<dbReference type="GeneID" id="67378187"/>
<dbReference type="KEGG" id="vha:VIBHAR_01230"/>
<dbReference type="PATRIC" id="fig|338187.25.peg.1400"/>
<dbReference type="Proteomes" id="UP000008152">
    <property type="component" value="Chromosome I"/>
</dbReference>
<dbReference type="GO" id="GO:0005829">
    <property type="term" value="C:cytosol"/>
    <property type="evidence" value="ECO:0007669"/>
    <property type="project" value="TreeGrafter"/>
</dbReference>
<dbReference type="GO" id="GO:0051539">
    <property type="term" value="F:4 iron, 4 sulfur cluster binding"/>
    <property type="evidence" value="ECO:0007669"/>
    <property type="project" value="UniProtKB-UniRule"/>
</dbReference>
<dbReference type="GO" id="GO:0046872">
    <property type="term" value="F:metal ion binding"/>
    <property type="evidence" value="ECO:0007669"/>
    <property type="project" value="UniProtKB-KW"/>
</dbReference>
<dbReference type="GO" id="GO:0035597">
    <property type="term" value="F:N6-isopentenyladenosine methylthiotransferase activity"/>
    <property type="evidence" value="ECO:0007669"/>
    <property type="project" value="TreeGrafter"/>
</dbReference>
<dbReference type="CDD" id="cd01335">
    <property type="entry name" value="Radical_SAM"/>
    <property type="match status" value="1"/>
</dbReference>
<dbReference type="FunFam" id="3.40.50.12160:FF:000001">
    <property type="entry name" value="tRNA-2-methylthio-N(6)-dimethylallyladenosine synthase"/>
    <property type="match status" value="1"/>
</dbReference>
<dbReference type="FunFam" id="3.80.30.20:FF:000001">
    <property type="entry name" value="tRNA-2-methylthio-N(6)-dimethylallyladenosine synthase 2"/>
    <property type="match status" value="1"/>
</dbReference>
<dbReference type="Gene3D" id="3.40.50.12160">
    <property type="entry name" value="Methylthiotransferase, N-terminal domain"/>
    <property type="match status" value="1"/>
</dbReference>
<dbReference type="Gene3D" id="3.80.30.20">
    <property type="entry name" value="tm_1862 like domain"/>
    <property type="match status" value="1"/>
</dbReference>
<dbReference type="HAMAP" id="MF_01864">
    <property type="entry name" value="tRNA_metthiotr_MiaB"/>
    <property type="match status" value="1"/>
</dbReference>
<dbReference type="InterPro" id="IPR006638">
    <property type="entry name" value="Elp3/MiaA/NifB-like_rSAM"/>
</dbReference>
<dbReference type="InterPro" id="IPR005839">
    <property type="entry name" value="Methylthiotransferase"/>
</dbReference>
<dbReference type="InterPro" id="IPR020612">
    <property type="entry name" value="Methylthiotransferase_CS"/>
</dbReference>
<dbReference type="InterPro" id="IPR013848">
    <property type="entry name" value="Methylthiotransferase_N"/>
</dbReference>
<dbReference type="InterPro" id="IPR038135">
    <property type="entry name" value="Methylthiotransferase_N_sf"/>
</dbReference>
<dbReference type="InterPro" id="IPR006463">
    <property type="entry name" value="MiaB_methiolase"/>
</dbReference>
<dbReference type="InterPro" id="IPR007197">
    <property type="entry name" value="rSAM"/>
</dbReference>
<dbReference type="InterPro" id="IPR023404">
    <property type="entry name" value="rSAM_horseshoe"/>
</dbReference>
<dbReference type="InterPro" id="IPR002792">
    <property type="entry name" value="TRAM_dom"/>
</dbReference>
<dbReference type="NCBIfam" id="TIGR01574">
    <property type="entry name" value="miaB-methiolase"/>
    <property type="match status" value="1"/>
</dbReference>
<dbReference type="NCBIfam" id="TIGR00089">
    <property type="entry name" value="MiaB/RimO family radical SAM methylthiotransferase"/>
    <property type="match status" value="1"/>
</dbReference>
<dbReference type="PANTHER" id="PTHR43020">
    <property type="entry name" value="CDK5 REGULATORY SUBUNIT-ASSOCIATED PROTEIN 1"/>
    <property type="match status" value="1"/>
</dbReference>
<dbReference type="PANTHER" id="PTHR43020:SF2">
    <property type="entry name" value="MITOCHONDRIAL TRNA METHYLTHIOTRANSFERASE CDK5RAP1"/>
    <property type="match status" value="1"/>
</dbReference>
<dbReference type="Pfam" id="PF04055">
    <property type="entry name" value="Radical_SAM"/>
    <property type="match status" value="1"/>
</dbReference>
<dbReference type="Pfam" id="PF01938">
    <property type="entry name" value="TRAM"/>
    <property type="match status" value="1"/>
</dbReference>
<dbReference type="Pfam" id="PF00919">
    <property type="entry name" value="UPF0004"/>
    <property type="match status" value="1"/>
</dbReference>
<dbReference type="SFLD" id="SFLDF00273">
    <property type="entry name" value="(dimethylallyl)adenosine_tRNA"/>
    <property type="match status" value="1"/>
</dbReference>
<dbReference type="SFLD" id="SFLDG01082">
    <property type="entry name" value="B12-binding_domain_containing"/>
    <property type="match status" value="1"/>
</dbReference>
<dbReference type="SFLD" id="SFLDS00029">
    <property type="entry name" value="Radical_SAM"/>
    <property type="match status" value="1"/>
</dbReference>
<dbReference type="SMART" id="SM00729">
    <property type="entry name" value="Elp3"/>
    <property type="match status" value="1"/>
</dbReference>
<dbReference type="SUPFAM" id="SSF102114">
    <property type="entry name" value="Radical SAM enzymes"/>
    <property type="match status" value="1"/>
</dbReference>
<dbReference type="PROSITE" id="PS51449">
    <property type="entry name" value="MTTASE_N"/>
    <property type="match status" value="1"/>
</dbReference>
<dbReference type="PROSITE" id="PS01278">
    <property type="entry name" value="MTTASE_RADICAL"/>
    <property type="match status" value="1"/>
</dbReference>
<dbReference type="PROSITE" id="PS51918">
    <property type="entry name" value="RADICAL_SAM"/>
    <property type="match status" value="1"/>
</dbReference>
<dbReference type="PROSITE" id="PS50926">
    <property type="entry name" value="TRAM"/>
    <property type="match status" value="1"/>
</dbReference>
<comment type="function">
    <text evidence="1">Catalyzes the methylthiolation of N6-(dimethylallyl)adenosine (i(6)A), leading to the formation of 2-methylthio-N6-(dimethylallyl)adenosine (ms(2)i(6)A) at position 37 in tRNAs that read codons beginning with uridine.</text>
</comment>
<comment type="catalytic activity">
    <reaction evidence="1">
        <text>N(6)-dimethylallyladenosine(37) in tRNA + (sulfur carrier)-SH + AH2 + 2 S-adenosyl-L-methionine = 2-methylsulfanyl-N(6)-dimethylallyladenosine(37) in tRNA + (sulfur carrier)-H + 5'-deoxyadenosine + L-methionine + A + S-adenosyl-L-homocysteine + 2 H(+)</text>
        <dbReference type="Rhea" id="RHEA:37067"/>
        <dbReference type="Rhea" id="RHEA-COMP:10375"/>
        <dbReference type="Rhea" id="RHEA-COMP:10376"/>
        <dbReference type="Rhea" id="RHEA-COMP:14737"/>
        <dbReference type="Rhea" id="RHEA-COMP:14739"/>
        <dbReference type="ChEBI" id="CHEBI:13193"/>
        <dbReference type="ChEBI" id="CHEBI:15378"/>
        <dbReference type="ChEBI" id="CHEBI:17319"/>
        <dbReference type="ChEBI" id="CHEBI:17499"/>
        <dbReference type="ChEBI" id="CHEBI:29917"/>
        <dbReference type="ChEBI" id="CHEBI:57844"/>
        <dbReference type="ChEBI" id="CHEBI:57856"/>
        <dbReference type="ChEBI" id="CHEBI:59789"/>
        <dbReference type="ChEBI" id="CHEBI:64428"/>
        <dbReference type="ChEBI" id="CHEBI:74415"/>
        <dbReference type="ChEBI" id="CHEBI:74417"/>
        <dbReference type="EC" id="2.8.4.3"/>
    </reaction>
</comment>
<comment type="cofactor">
    <cofactor evidence="1">
        <name>[4Fe-4S] cluster</name>
        <dbReference type="ChEBI" id="CHEBI:49883"/>
    </cofactor>
    <text evidence="1">Binds 2 [4Fe-4S] clusters. One cluster is coordinated with 3 cysteines and an exchangeable S-adenosyl-L-methionine.</text>
</comment>
<comment type="subunit">
    <text evidence="1">Monomer.</text>
</comment>
<comment type="subcellular location">
    <subcellularLocation>
        <location evidence="1">Cytoplasm</location>
    </subcellularLocation>
</comment>
<comment type="similarity">
    <text evidence="1">Belongs to the methylthiotransferase family. MiaB subfamily.</text>
</comment>
<reference key="1">
    <citation type="submission" date="2007-08" db="EMBL/GenBank/DDBJ databases">
        <authorList>
            <consortium name="The Vibrio harveyi Genome Sequencing Project"/>
            <person name="Bassler B."/>
            <person name="Clifton S.W."/>
            <person name="Fulton L."/>
            <person name="Delehaunty K."/>
            <person name="Fronick C."/>
            <person name="Harrison M."/>
            <person name="Markivic C."/>
            <person name="Fulton R."/>
            <person name="Tin-Wollam A.-M."/>
            <person name="Shah N."/>
            <person name="Pepin K."/>
            <person name="Nash W."/>
            <person name="Thiruvilangam P."/>
            <person name="Bhonagiri V."/>
            <person name="Waters C."/>
            <person name="Tu K.C."/>
            <person name="Irgon J."/>
            <person name="Wilson R.K."/>
        </authorList>
    </citation>
    <scope>NUCLEOTIDE SEQUENCE [LARGE SCALE GENOMIC DNA]</scope>
    <source>
        <strain>ATCC BAA-1116 / BB120</strain>
    </source>
</reference>
<protein>
    <recommendedName>
        <fullName evidence="1">tRNA-2-methylthio-N(6)-dimethylallyladenosine synthase</fullName>
        <ecNumber evidence="1">2.8.4.3</ecNumber>
    </recommendedName>
    <alternativeName>
        <fullName evidence="1">(Dimethylallyl)adenosine tRNA methylthiotransferase MiaB</fullName>
    </alternativeName>
    <alternativeName>
        <fullName evidence="1">tRNA-i(6)A37 methylthiotransferase</fullName>
    </alternativeName>
</protein>
<keyword id="KW-0004">4Fe-4S</keyword>
<keyword id="KW-0963">Cytoplasm</keyword>
<keyword id="KW-0408">Iron</keyword>
<keyword id="KW-0411">Iron-sulfur</keyword>
<keyword id="KW-0479">Metal-binding</keyword>
<keyword id="KW-0949">S-adenosyl-L-methionine</keyword>
<keyword id="KW-0808">Transferase</keyword>
<keyword id="KW-0819">tRNA processing</keyword>
<evidence type="ECO:0000255" key="1">
    <source>
        <dbReference type="HAMAP-Rule" id="MF_01864"/>
    </source>
</evidence>
<evidence type="ECO:0000255" key="2">
    <source>
        <dbReference type="PROSITE-ProRule" id="PRU01266"/>
    </source>
</evidence>
<feature type="chain" id="PRO_0000374633" description="tRNA-2-methylthio-N(6)-dimethylallyladenosine synthase">
    <location>
        <begin position="1"/>
        <end position="474"/>
    </location>
</feature>
<feature type="domain" description="MTTase N-terminal" evidence="1">
    <location>
        <begin position="3"/>
        <end position="120"/>
    </location>
</feature>
<feature type="domain" description="Radical SAM core" evidence="2">
    <location>
        <begin position="143"/>
        <end position="375"/>
    </location>
</feature>
<feature type="domain" description="TRAM" evidence="1">
    <location>
        <begin position="378"/>
        <end position="441"/>
    </location>
</feature>
<feature type="binding site" evidence="1">
    <location>
        <position position="12"/>
    </location>
    <ligand>
        <name>[4Fe-4S] cluster</name>
        <dbReference type="ChEBI" id="CHEBI:49883"/>
        <label>1</label>
    </ligand>
</feature>
<feature type="binding site" evidence="1">
    <location>
        <position position="49"/>
    </location>
    <ligand>
        <name>[4Fe-4S] cluster</name>
        <dbReference type="ChEBI" id="CHEBI:49883"/>
        <label>1</label>
    </ligand>
</feature>
<feature type="binding site" evidence="1">
    <location>
        <position position="83"/>
    </location>
    <ligand>
        <name>[4Fe-4S] cluster</name>
        <dbReference type="ChEBI" id="CHEBI:49883"/>
        <label>1</label>
    </ligand>
</feature>
<feature type="binding site" evidence="1">
    <location>
        <position position="157"/>
    </location>
    <ligand>
        <name>[4Fe-4S] cluster</name>
        <dbReference type="ChEBI" id="CHEBI:49883"/>
        <label>2</label>
        <note>4Fe-4S-S-AdoMet</note>
    </ligand>
</feature>
<feature type="binding site" evidence="1">
    <location>
        <position position="161"/>
    </location>
    <ligand>
        <name>[4Fe-4S] cluster</name>
        <dbReference type="ChEBI" id="CHEBI:49883"/>
        <label>2</label>
        <note>4Fe-4S-S-AdoMet</note>
    </ligand>
</feature>
<feature type="binding site" evidence="1">
    <location>
        <position position="164"/>
    </location>
    <ligand>
        <name>[4Fe-4S] cluster</name>
        <dbReference type="ChEBI" id="CHEBI:49883"/>
        <label>2</label>
        <note>4Fe-4S-S-AdoMet</note>
    </ligand>
</feature>
<accession>A7N1G9</accession>
<name>MIAB_VIBC1</name>
<gene>
    <name evidence="1" type="primary">miaB</name>
    <name type="ordered locus">VIBHAR_01230</name>
</gene>
<organism>
    <name type="scientific">Vibrio campbellii (strain ATCC BAA-1116)</name>
    <dbReference type="NCBI Taxonomy" id="2902295"/>
    <lineage>
        <taxon>Bacteria</taxon>
        <taxon>Pseudomonadati</taxon>
        <taxon>Pseudomonadota</taxon>
        <taxon>Gammaproteobacteria</taxon>
        <taxon>Vibrionales</taxon>
        <taxon>Vibrionaceae</taxon>
        <taxon>Vibrio</taxon>
    </lineage>
</organism>